<name>RUVC_RUMCH</name>
<reference key="1">
    <citation type="submission" date="2009-01" db="EMBL/GenBank/DDBJ databases">
        <title>Complete sequence of Clostridium cellulolyticum H10.</title>
        <authorList>
            <consortium name="US DOE Joint Genome Institute"/>
            <person name="Lucas S."/>
            <person name="Copeland A."/>
            <person name="Lapidus A."/>
            <person name="Glavina del Rio T."/>
            <person name="Dalin E."/>
            <person name="Tice H."/>
            <person name="Bruce D."/>
            <person name="Goodwin L."/>
            <person name="Pitluck S."/>
            <person name="Chertkov O."/>
            <person name="Saunders E."/>
            <person name="Brettin T."/>
            <person name="Detter J.C."/>
            <person name="Han C."/>
            <person name="Larimer F."/>
            <person name="Land M."/>
            <person name="Hauser L."/>
            <person name="Kyrpides N."/>
            <person name="Ivanova N."/>
            <person name="Zhou J."/>
            <person name="Richardson P."/>
        </authorList>
    </citation>
    <scope>NUCLEOTIDE SEQUENCE [LARGE SCALE GENOMIC DNA]</scope>
    <source>
        <strain>ATCC 35319 / DSM 5812 / JCM 6584 / H10</strain>
    </source>
</reference>
<evidence type="ECO:0000255" key="1">
    <source>
        <dbReference type="HAMAP-Rule" id="MF_00034"/>
    </source>
</evidence>
<sequence length="166" mass="18073">MIIMGIDPGFAITGYGVVKYEGNKFSVLDYNAITTVASMKFSDRLLVLYNELEKLINKFRPDAISIEELFFNKNIKTALTVGHGRGVAVLAAAKSGIDIFEYTPLQVKQSVVGYGRAEKAQVQQMVKAILNLPAIPKPDDVADALAVAICHGNSHRMGALLGNDRF</sequence>
<accession>B8I1A2</accession>
<keyword id="KW-0963">Cytoplasm</keyword>
<keyword id="KW-0227">DNA damage</keyword>
<keyword id="KW-0233">DNA recombination</keyword>
<keyword id="KW-0234">DNA repair</keyword>
<keyword id="KW-0238">DNA-binding</keyword>
<keyword id="KW-0255">Endonuclease</keyword>
<keyword id="KW-0378">Hydrolase</keyword>
<keyword id="KW-0460">Magnesium</keyword>
<keyword id="KW-0479">Metal-binding</keyword>
<keyword id="KW-0540">Nuclease</keyword>
<keyword id="KW-1185">Reference proteome</keyword>
<proteinExistence type="inferred from homology"/>
<gene>
    <name evidence="1" type="primary">ruvC</name>
    <name type="ordered locus">Ccel_1346</name>
</gene>
<organism>
    <name type="scientific">Ruminiclostridium cellulolyticum (strain ATCC 35319 / DSM 5812 / JCM 6584 / H10)</name>
    <name type="common">Clostridium cellulolyticum</name>
    <dbReference type="NCBI Taxonomy" id="394503"/>
    <lineage>
        <taxon>Bacteria</taxon>
        <taxon>Bacillati</taxon>
        <taxon>Bacillota</taxon>
        <taxon>Clostridia</taxon>
        <taxon>Eubacteriales</taxon>
        <taxon>Oscillospiraceae</taxon>
        <taxon>Ruminiclostridium</taxon>
    </lineage>
</organism>
<feature type="chain" id="PRO_1000195245" description="Crossover junction endodeoxyribonuclease RuvC">
    <location>
        <begin position="1"/>
        <end position="166"/>
    </location>
</feature>
<feature type="active site" evidence="1">
    <location>
        <position position="7"/>
    </location>
</feature>
<feature type="active site" evidence="1">
    <location>
        <position position="67"/>
    </location>
</feature>
<feature type="active site" evidence="1">
    <location>
        <position position="140"/>
    </location>
</feature>
<feature type="binding site" evidence="1">
    <location>
        <position position="7"/>
    </location>
    <ligand>
        <name>Mg(2+)</name>
        <dbReference type="ChEBI" id="CHEBI:18420"/>
        <label>1</label>
    </ligand>
</feature>
<feature type="binding site" evidence="1">
    <location>
        <position position="67"/>
    </location>
    <ligand>
        <name>Mg(2+)</name>
        <dbReference type="ChEBI" id="CHEBI:18420"/>
        <label>2</label>
    </ligand>
</feature>
<feature type="binding site" evidence="1">
    <location>
        <position position="140"/>
    </location>
    <ligand>
        <name>Mg(2+)</name>
        <dbReference type="ChEBI" id="CHEBI:18420"/>
        <label>1</label>
    </ligand>
</feature>
<dbReference type="EC" id="3.1.21.10" evidence="1"/>
<dbReference type="EMBL" id="CP001348">
    <property type="protein sequence ID" value="ACL75700.1"/>
    <property type="molecule type" value="Genomic_DNA"/>
</dbReference>
<dbReference type="RefSeq" id="WP_015924848.1">
    <property type="nucleotide sequence ID" value="NC_011898.1"/>
</dbReference>
<dbReference type="SMR" id="B8I1A2"/>
<dbReference type="STRING" id="394503.Ccel_1346"/>
<dbReference type="KEGG" id="cce:Ccel_1346"/>
<dbReference type="eggNOG" id="COG0817">
    <property type="taxonomic scope" value="Bacteria"/>
</dbReference>
<dbReference type="HOGENOM" id="CLU_091257_3_1_9"/>
<dbReference type="OrthoDB" id="9805499at2"/>
<dbReference type="Proteomes" id="UP000001349">
    <property type="component" value="Chromosome"/>
</dbReference>
<dbReference type="GO" id="GO:0005737">
    <property type="term" value="C:cytoplasm"/>
    <property type="evidence" value="ECO:0007669"/>
    <property type="project" value="UniProtKB-SubCell"/>
</dbReference>
<dbReference type="GO" id="GO:0048476">
    <property type="term" value="C:Holliday junction resolvase complex"/>
    <property type="evidence" value="ECO:0007669"/>
    <property type="project" value="UniProtKB-UniRule"/>
</dbReference>
<dbReference type="GO" id="GO:0008821">
    <property type="term" value="F:crossover junction DNA endonuclease activity"/>
    <property type="evidence" value="ECO:0007669"/>
    <property type="project" value="UniProtKB-UniRule"/>
</dbReference>
<dbReference type="GO" id="GO:0003677">
    <property type="term" value="F:DNA binding"/>
    <property type="evidence" value="ECO:0007669"/>
    <property type="project" value="UniProtKB-KW"/>
</dbReference>
<dbReference type="GO" id="GO:0000287">
    <property type="term" value="F:magnesium ion binding"/>
    <property type="evidence" value="ECO:0007669"/>
    <property type="project" value="UniProtKB-UniRule"/>
</dbReference>
<dbReference type="GO" id="GO:0006310">
    <property type="term" value="P:DNA recombination"/>
    <property type="evidence" value="ECO:0007669"/>
    <property type="project" value="UniProtKB-UniRule"/>
</dbReference>
<dbReference type="GO" id="GO:0006281">
    <property type="term" value="P:DNA repair"/>
    <property type="evidence" value="ECO:0007669"/>
    <property type="project" value="UniProtKB-UniRule"/>
</dbReference>
<dbReference type="CDD" id="cd16962">
    <property type="entry name" value="RuvC"/>
    <property type="match status" value="1"/>
</dbReference>
<dbReference type="FunFam" id="3.30.420.10:FF:000002">
    <property type="entry name" value="Crossover junction endodeoxyribonuclease RuvC"/>
    <property type="match status" value="1"/>
</dbReference>
<dbReference type="Gene3D" id="3.30.420.10">
    <property type="entry name" value="Ribonuclease H-like superfamily/Ribonuclease H"/>
    <property type="match status" value="1"/>
</dbReference>
<dbReference type="HAMAP" id="MF_00034">
    <property type="entry name" value="RuvC"/>
    <property type="match status" value="1"/>
</dbReference>
<dbReference type="InterPro" id="IPR012337">
    <property type="entry name" value="RNaseH-like_sf"/>
</dbReference>
<dbReference type="InterPro" id="IPR036397">
    <property type="entry name" value="RNaseH_sf"/>
</dbReference>
<dbReference type="InterPro" id="IPR020563">
    <property type="entry name" value="X-over_junc_endoDNase_Mg_BS"/>
</dbReference>
<dbReference type="InterPro" id="IPR002176">
    <property type="entry name" value="X-over_junc_endoDNase_RuvC"/>
</dbReference>
<dbReference type="NCBIfam" id="NF000711">
    <property type="entry name" value="PRK00039.2-1"/>
    <property type="match status" value="1"/>
</dbReference>
<dbReference type="NCBIfam" id="TIGR00228">
    <property type="entry name" value="ruvC"/>
    <property type="match status" value="1"/>
</dbReference>
<dbReference type="PANTHER" id="PTHR30194">
    <property type="entry name" value="CROSSOVER JUNCTION ENDODEOXYRIBONUCLEASE RUVC"/>
    <property type="match status" value="1"/>
</dbReference>
<dbReference type="PANTHER" id="PTHR30194:SF3">
    <property type="entry name" value="CROSSOVER JUNCTION ENDODEOXYRIBONUCLEASE RUVC"/>
    <property type="match status" value="1"/>
</dbReference>
<dbReference type="Pfam" id="PF02075">
    <property type="entry name" value="RuvC"/>
    <property type="match status" value="1"/>
</dbReference>
<dbReference type="PRINTS" id="PR00696">
    <property type="entry name" value="RSOLVASERUVC"/>
</dbReference>
<dbReference type="SUPFAM" id="SSF53098">
    <property type="entry name" value="Ribonuclease H-like"/>
    <property type="match status" value="1"/>
</dbReference>
<dbReference type="PROSITE" id="PS01321">
    <property type="entry name" value="RUVC"/>
    <property type="match status" value="1"/>
</dbReference>
<protein>
    <recommendedName>
        <fullName evidence="1">Crossover junction endodeoxyribonuclease RuvC</fullName>
        <ecNumber evidence="1">3.1.21.10</ecNumber>
    </recommendedName>
    <alternativeName>
        <fullName evidence="1">Holliday junction nuclease RuvC</fullName>
    </alternativeName>
    <alternativeName>
        <fullName evidence="1">Holliday junction resolvase RuvC</fullName>
    </alternativeName>
</protein>
<comment type="function">
    <text evidence="1">The RuvA-RuvB-RuvC complex processes Holliday junction (HJ) DNA during genetic recombination and DNA repair. Endonuclease that resolves HJ intermediates. Cleaves cruciform DNA by making single-stranded nicks across the HJ at symmetrical positions within the homologous arms, yielding a 5'-phosphate and a 3'-hydroxyl group; requires a central core of homology in the junction. The consensus cleavage sequence is 5'-(A/T)TT(C/G)-3'. Cleavage occurs on the 3'-side of the TT dinucleotide at the point of strand exchange. HJ branch migration catalyzed by RuvA-RuvB allows RuvC to scan DNA until it finds its consensus sequence, where it cleaves and resolves the cruciform DNA.</text>
</comment>
<comment type="catalytic activity">
    <reaction evidence="1">
        <text>Endonucleolytic cleavage at a junction such as a reciprocal single-stranded crossover between two homologous DNA duplexes (Holliday junction).</text>
        <dbReference type="EC" id="3.1.21.10"/>
    </reaction>
</comment>
<comment type="cofactor">
    <cofactor evidence="1">
        <name>Mg(2+)</name>
        <dbReference type="ChEBI" id="CHEBI:18420"/>
    </cofactor>
    <text evidence="1">Binds 2 Mg(2+) ion per subunit.</text>
</comment>
<comment type="subunit">
    <text evidence="1">Homodimer which binds Holliday junction (HJ) DNA. The HJ becomes 2-fold symmetrical on binding to RuvC with unstacked arms; it has a different conformation from HJ DNA in complex with RuvA. In the full resolvosome a probable DNA-RuvA(4)-RuvB(12)-RuvC(2) complex forms which resolves the HJ.</text>
</comment>
<comment type="subcellular location">
    <subcellularLocation>
        <location evidence="1">Cytoplasm</location>
    </subcellularLocation>
</comment>
<comment type="similarity">
    <text evidence="1">Belongs to the RuvC family.</text>
</comment>